<name>RHG29_MOUSE</name>
<evidence type="ECO:0000250" key="1"/>
<evidence type="ECO:0000250" key="2">
    <source>
        <dbReference type="UniProtKB" id="Q52LW3"/>
    </source>
</evidence>
<evidence type="ECO:0000250" key="3">
    <source>
        <dbReference type="UniProtKB" id="Q5PQJ5"/>
    </source>
</evidence>
<evidence type="ECO:0000255" key="4"/>
<evidence type="ECO:0000255" key="5">
    <source>
        <dbReference type="PROSITE-ProRule" id="PRU00172"/>
    </source>
</evidence>
<evidence type="ECO:0000255" key="6">
    <source>
        <dbReference type="PROSITE-ProRule" id="PRU00226"/>
    </source>
</evidence>
<evidence type="ECO:0000255" key="7">
    <source>
        <dbReference type="PROSITE-ProRule" id="PRU01077"/>
    </source>
</evidence>
<evidence type="ECO:0000256" key="8">
    <source>
        <dbReference type="SAM" id="MobiDB-lite"/>
    </source>
</evidence>
<evidence type="ECO:0000269" key="9">
    <source>
    </source>
</evidence>
<evidence type="ECO:0000303" key="10">
    <source>
    </source>
</evidence>
<evidence type="ECO:0000305" key="11"/>
<evidence type="ECO:0007744" key="12">
    <source>
    </source>
</evidence>
<evidence type="ECO:0007744" key="13">
    <source>
    </source>
</evidence>
<gene>
    <name type="primary">Arhgap29</name>
</gene>
<organism>
    <name type="scientific">Mus musculus</name>
    <name type="common">Mouse</name>
    <dbReference type="NCBI Taxonomy" id="10090"/>
    <lineage>
        <taxon>Eukaryota</taxon>
        <taxon>Metazoa</taxon>
        <taxon>Chordata</taxon>
        <taxon>Craniata</taxon>
        <taxon>Vertebrata</taxon>
        <taxon>Euteleostomi</taxon>
        <taxon>Mammalia</taxon>
        <taxon>Eutheria</taxon>
        <taxon>Euarchontoglires</taxon>
        <taxon>Glires</taxon>
        <taxon>Rodentia</taxon>
        <taxon>Myomorpha</taxon>
        <taxon>Muroidea</taxon>
        <taxon>Muridae</taxon>
        <taxon>Murinae</taxon>
        <taxon>Mus</taxon>
        <taxon>Mus</taxon>
    </lineage>
</organism>
<dbReference type="EMBL" id="AK043637">
    <property type="protein sequence ID" value="BAC31603.2"/>
    <property type="molecule type" value="mRNA"/>
</dbReference>
<dbReference type="EMBL" id="AK044979">
    <property type="protein sequence ID" value="BAC32168.2"/>
    <property type="molecule type" value="mRNA"/>
</dbReference>
<dbReference type="EMBL" id="AK132716">
    <property type="protein sequence ID" value="BAE21318.1"/>
    <property type="molecule type" value="mRNA"/>
</dbReference>
<dbReference type="EMBL" id="BC040387">
    <property type="protein sequence ID" value="AAH40387.1"/>
    <property type="molecule type" value="mRNA"/>
</dbReference>
<dbReference type="EMBL" id="BC052858">
    <property type="protein sequence ID" value="AAH52858.1"/>
    <property type="molecule type" value="mRNA"/>
</dbReference>
<dbReference type="CCDS" id="CCDS17807.1">
    <molecule id="Q8CGF1-1"/>
</dbReference>
<dbReference type="RefSeq" id="NP_001343453.1">
    <molecule id="Q8CGF1-1"/>
    <property type="nucleotide sequence ID" value="NM_001356524.1"/>
</dbReference>
<dbReference type="RefSeq" id="NP_766113.1">
    <molecule id="Q8CGF1-1"/>
    <property type="nucleotide sequence ID" value="NM_172525.3"/>
</dbReference>
<dbReference type="RefSeq" id="XP_006501351.1">
    <property type="nucleotide sequence ID" value="XM_006501288.3"/>
</dbReference>
<dbReference type="SMR" id="Q8CGF1"/>
<dbReference type="BioGRID" id="229497">
    <property type="interactions" value="9"/>
</dbReference>
<dbReference type="FunCoup" id="Q8CGF1">
    <property type="interactions" value="104"/>
</dbReference>
<dbReference type="STRING" id="10090.ENSMUSP00000044624"/>
<dbReference type="iPTMnet" id="Q8CGF1"/>
<dbReference type="PhosphoSitePlus" id="Q8CGF1"/>
<dbReference type="SwissPalm" id="Q8CGF1"/>
<dbReference type="jPOST" id="Q8CGF1"/>
<dbReference type="PaxDb" id="10090-ENSMUSP00000044624"/>
<dbReference type="PeptideAtlas" id="Q8CGF1"/>
<dbReference type="ProteomicsDB" id="255332">
    <molecule id="Q8CGF1-1"/>
</dbReference>
<dbReference type="ProteomicsDB" id="255333">
    <molecule id="Q8CGF1-2"/>
</dbReference>
<dbReference type="Pumba" id="Q8CGF1"/>
<dbReference type="Antibodypedia" id="19948">
    <property type="antibodies" value="102 antibodies from 18 providers"/>
</dbReference>
<dbReference type="DNASU" id="214137"/>
<dbReference type="Ensembl" id="ENSMUST00000037958.14">
    <molecule id="Q8CGF1-1"/>
    <property type="protein sequence ID" value="ENSMUSP00000044624.8"/>
    <property type="gene ID" value="ENSMUSG00000039831.17"/>
</dbReference>
<dbReference type="GeneID" id="214137"/>
<dbReference type="KEGG" id="mmu:214137"/>
<dbReference type="UCSC" id="uc008reh.1">
    <molecule id="Q8CGF1-1"/>
    <property type="organism name" value="mouse"/>
</dbReference>
<dbReference type="AGR" id="MGI:2443818"/>
<dbReference type="CTD" id="9411"/>
<dbReference type="MGI" id="MGI:2443818">
    <property type="gene designation" value="Arhgap29"/>
</dbReference>
<dbReference type="VEuPathDB" id="HostDB:ENSMUSG00000039831"/>
<dbReference type="eggNOG" id="KOG1453">
    <property type="taxonomic scope" value="Eukaryota"/>
</dbReference>
<dbReference type="GeneTree" id="ENSGT00950000183110"/>
<dbReference type="HOGENOM" id="CLU_006236_2_0_1"/>
<dbReference type="InParanoid" id="Q8CGF1"/>
<dbReference type="OMA" id="DQYQSCM"/>
<dbReference type="OrthoDB" id="79452at2759"/>
<dbReference type="PhylomeDB" id="Q8CGF1"/>
<dbReference type="TreeFam" id="TF351450"/>
<dbReference type="Reactome" id="R-MMU-8980692">
    <property type="pathway name" value="RHOA GTPase cycle"/>
</dbReference>
<dbReference type="Reactome" id="R-MMU-9013148">
    <property type="pathway name" value="CDC42 GTPase cycle"/>
</dbReference>
<dbReference type="Reactome" id="R-MMU-9013149">
    <property type="pathway name" value="RAC1 GTPase cycle"/>
</dbReference>
<dbReference type="BioGRID-ORCS" id="214137">
    <property type="hits" value="1 hit in 77 CRISPR screens"/>
</dbReference>
<dbReference type="ChiTaRS" id="Arhgap29">
    <property type="organism name" value="mouse"/>
</dbReference>
<dbReference type="PRO" id="PR:Q8CGF1"/>
<dbReference type="Proteomes" id="UP000000589">
    <property type="component" value="Chromosome 3"/>
</dbReference>
<dbReference type="RNAct" id="Q8CGF1">
    <property type="molecule type" value="protein"/>
</dbReference>
<dbReference type="Bgee" id="ENSMUSG00000039831">
    <property type="expression patterns" value="Expressed in cumulus cell and 235 other cell types or tissues"/>
</dbReference>
<dbReference type="ExpressionAtlas" id="Q8CGF1">
    <property type="expression patterns" value="baseline and differential"/>
</dbReference>
<dbReference type="GO" id="GO:0005737">
    <property type="term" value="C:cytoplasm"/>
    <property type="evidence" value="ECO:0007669"/>
    <property type="project" value="Ensembl"/>
</dbReference>
<dbReference type="GO" id="GO:0032991">
    <property type="term" value="C:protein-containing complex"/>
    <property type="evidence" value="ECO:0007669"/>
    <property type="project" value="Ensembl"/>
</dbReference>
<dbReference type="GO" id="GO:0005096">
    <property type="term" value="F:GTPase activator activity"/>
    <property type="evidence" value="ECO:0007669"/>
    <property type="project" value="UniProtKB-KW"/>
</dbReference>
<dbReference type="GO" id="GO:0030165">
    <property type="term" value="F:PDZ domain binding"/>
    <property type="evidence" value="ECO:0000266"/>
    <property type="project" value="MGI"/>
</dbReference>
<dbReference type="GO" id="GO:0008270">
    <property type="term" value="F:zinc ion binding"/>
    <property type="evidence" value="ECO:0007669"/>
    <property type="project" value="UniProtKB-KW"/>
</dbReference>
<dbReference type="GO" id="GO:0051056">
    <property type="term" value="P:regulation of small GTPase mediated signal transduction"/>
    <property type="evidence" value="ECO:0007669"/>
    <property type="project" value="UniProtKB-ARBA"/>
</dbReference>
<dbReference type="GO" id="GO:0007165">
    <property type="term" value="P:signal transduction"/>
    <property type="evidence" value="ECO:0007669"/>
    <property type="project" value="InterPro"/>
</dbReference>
<dbReference type="CDD" id="cd20816">
    <property type="entry name" value="C1_GMIP-like"/>
    <property type="match status" value="1"/>
</dbReference>
<dbReference type="FunFam" id="1.10.555.10:FF:000016">
    <property type="entry name" value="Rho GTPase activating protein 29"/>
    <property type="match status" value="1"/>
</dbReference>
<dbReference type="FunFam" id="1.20.1270.60:FF:000038">
    <property type="entry name" value="Rho GTPase activating protein 29"/>
    <property type="match status" value="1"/>
</dbReference>
<dbReference type="Gene3D" id="3.30.60.20">
    <property type="match status" value="1"/>
</dbReference>
<dbReference type="Gene3D" id="1.20.1270.60">
    <property type="entry name" value="Arfaptin homology (AH) domain/BAR domain"/>
    <property type="match status" value="1"/>
</dbReference>
<dbReference type="Gene3D" id="1.10.555.10">
    <property type="entry name" value="Rho GTPase activation protein"/>
    <property type="match status" value="1"/>
</dbReference>
<dbReference type="InterPro" id="IPR027267">
    <property type="entry name" value="AH/BAR_dom_sf"/>
</dbReference>
<dbReference type="InterPro" id="IPR046349">
    <property type="entry name" value="C1-like_sf"/>
</dbReference>
<dbReference type="InterPro" id="IPR031160">
    <property type="entry name" value="F_BAR"/>
</dbReference>
<dbReference type="InterPro" id="IPR054713">
    <property type="entry name" value="GMIP/FCHO2-like_FCH"/>
</dbReference>
<dbReference type="InterPro" id="IPR002219">
    <property type="entry name" value="PE/DAG-bd"/>
</dbReference>
<dbReference type="InterPro" id="IPR057028">
    <property type="entry name" value="RHG29_45_N"/>
</dbReference>
<dbReference type="InterPro" id="IPR008936">
    <property type="entry name" value="Rho_GTPase_activation_prot"/>
</dbReference>
<dbReference type="InterPro" id="IPR051025">
    <property type="entry name" value="RhoGAP"/>
</dbReference>
<dbReference type="InterPro" id="IPR000198">
    <property type="entry name" value="RhoGAP_dom"/>
</dbReference>
<dbReference type="PANTHER" id="PTHR15228:SF7">
    <property type="entry name" value="RHO GTPASE-ACTIVATING PROTEIN 29"/>
    <property type="match status" value="1"/>
</dbReference>
<dbReference type="PANTHER" id="PTHR15228">
    <property type="entry name" value="SPERMATHECAL PHYSIOLOGY VARIANT"/>
    <property type="match status" value="1"/>
</dbReference>
<dbReference type="Pfam" id="PF00130">
    <property type="entry name" value="C1_1"/>
    <property type="match status" value="1"/>
</dbReference>
<dbReference type="Pfam" id="PF22699">
    <property type="entry name" value="GMIP-like_FCH"/>
    <property type="match status" value="1"/>
</dbReference>
<dbReference type="Pfam" id="PF24235">
    <property type="entry name" value="RHG29_45_N"/>
    <property type="match status" value="1"/>
</dbReference>
<dbReference type="Pfam" id="PF00620">
    <property type="entry name" value="RhoGAP"/>
    <property type="match status" value="1"/>
</dbReference>
<dbReference type="SMART" id="SM00109">
    <property type="entry name" value="C1"/>
    <property type="match status" value="1"/>
</dbReference>
<dbReference type="SMART" id="SM00324">
    <property type="entry name" value="RhoGAP"/>
    <property type="match status" value="1"/>
</dbReference>
<dbReference type="SUPFAM" id="SSF103657">
    <property type="entry name" value="BAR/IMD domain-like"/>
    <property type="match status" value="1"/>
</dbReference>
<dbReference type="SUPFAM" id="SSF57889">
    <property type="entry name" value="Cysteine-rich domain"/>
    <property type="match status" value="1"/>
</dbReference>
<dbReference type="SUPFAM" id="SSF48350">
    <property type="entry name" value="GTPase activation domain, GAP"/>
    <property type="match status" value="1"/>
</dbReference>
<dbReference type="PROSITE" id="PS51741">
    <property type="entry name" value="F_BAR"/>
    <property type="match status" value="1"/>
</dbReference>
<dbReference type="PROSITE" id="PS50238">
    <property type="entry name" value="RHOGAP"/>
    <property type="match status" value="1"/>
</dbReference>
<dbReference type="PROSITE" id="PS00479">
    <property type="entry name" value="ZF_DAG_PE_1"/>
    <property type="match status" value="1"/>
</dbReference>
<dbReference type="PROSITE" id="PS50081">
    <property type="entry name" value="ZF_DAG_PE_2"/>
    <property type="match status" value="1"/>
</dbReference>
<accession>Q8CGF1</accession>
<accession>Q3V135</accession>
<accession>Q7TMW2</accession>
<accession>Q8BLJ2</accession>
<accession>Q8BLR8</accession>
<feature type="chain" id="PRO_0000317583" description="Rho GTPase-activating protein 29">
    <location>
        <begin position="1"/>
        <end position="1266"/>
    </location>
</feature>
<feature type="domain" description="F-BAR" evidence="7">
    <location>
        <begin position="192"/>
        <end position="462"/>
    </location>
</feature>
<feature type="domain" description="Rho-GAP" evidence="5">
    <location>
        <begin position="673"/>
        <end position="888"/>
    </location>
</feature>
<feature type="zinc finger region" description="Phorbol-ester/DAG-type" evidence="6">
    <location>
        <begin position="614"/>
        <end position="659"/>
    </location>
</feature>
<feature type="region of interest" description="Disordered" evidence="8">
    <location>
        <begin position="482"/>
        <end position="501"/>
    </location>
</feature>
<feature type="region of interest" description="Disordered" evidence="8">
    <location>
        <begin position="542"/>
        <end position="601"/>
    </location>
</feature>
<feature type="region of interest" description="Disordered" evidence="8">
    <location>
        <begin position="1039"/>
        <end position="1081"/>
    </location>
</feature>
<feature type="region of interest" description="Disordered" evidence="8">
    <location>
        <begin position="1116"/>
        <end position="1157"/>
    </location>
</feature>
<feature type="region of interest" description="Disordered" evidence="8">
    <location>
        <begin position="1209"/>
        <end position="1266"/>
    </location>
</feature>
<feature type="region of interest" description="Interaction with PTPN13/PTPL1" evidence="1">
    <location>
        <begin position="1263"/>
        <end position="1266"/>
    </location>
</feature>
<feature type="coiled-coil region" evidence="4">
    <location>
        <begin position="296"/>
        <end position="418"/>
    </location>
</feature>
<feature type="compositionally biased region" description="Polar residues" evidence="8">
    <location>
        <begin position="483"/>
        <end position="495"/>
    </location>
</feature>
<feature type="compositionally biased region" description="Low complexity" evidence="8">
    <location>
        <begin position="542"/>
        <end position="561"/>
    </location>
</feature>
<feature type="compositionally biased region" description="Polar residues" evidence="8">
    <location>
        <begin position="1072"/>
        <end position="1081"/>
    </location>
</feature>
<feature type="compositionally biased region" description="Basic and acidic residues" evidence="8">
    <location>
        <begin position="1124"/>
        <end position="1136"/>
    </location>
</feature>
<feature type="compositionally biased region" description="Acidic residues" evidence="8">
    <location>
        <begin position="1256"/>
        <end position="1266"/>
    </location>
</feature>
<feature type="site" description="Arginine finger; crucial for GTP hydrolysis by stabilizing the transition state" evidence="5">
    <location>
        <position position="709"/>
    </location>
</feature>
<feature type="modified residue" description="Phosphoserine" evidence="12">
    <location>
        <position position="171"/>
    </location>
</feature>
<feature type="modified residue" description="Phosphoserine" evidence="12 13">
    <location>
        <position position="176"/>
    </location>
</feature>
<feature type="modified residue" description="Phosphoserine" evidence="12 13">
    <location>
        <position position="179"/>
    </location>
</feature>
<feature type="modified residue" description="Phosphoserine" evidence="13">
    <location>
        <position position="190"/>
    </location>
</feature>
<feature type="modified residue" description="Phosphoserine" evidence="2">
    <location>
        <position position="501"/>
    </location>
</feature>
<feature type="modified residue" description="Phosphoserine" evidence="13">
    <location>
        <position position="521"/>
    </location>
</feature>
<feature type="modified residue" description="Phosphoserine" evidence="3">
    <location>
        <position position="554"/>
    </location>
</feature>
<feature type="modified residue" description="Phosphoserine" evidence="3">
    <location>
        <position position="920"/>
    </location>
</feature>
<feature type="modified residue" description="Phosphoserine" evidence="2">
    <location>
        <position position="956"/>
    </location>
</feature>
<feature type="modified residue" description="Phosphoserine" evidence="2">
    <location>
        <position position="1028"/>
    </location>
</feature>
<feature type="modified residue" description="Phosphoserine" evidence="13">
    <location>
        <position position="1149"/>
    </location>
</feature>
<feature type="modified residue" description="Phosphoserine" evidence="2">
    <location>
        <position position="1151"/>
    </location>
</feature>
<feature type="splice variant" id="VSP_031060" description="In isoform 2." evidence="10">
    <location>
        <begin position="379"/>
        <end position="1035"/>
    </location>
</feature>
<feature type="sequence conflict" description="In Ref. 2; AAH52858." evidence="11" ref="2">
    <original>I</original>
    <variation>T</variation>
    <location>
        <position position="165"/>
    </location>
</feature>
<feature type="sequence conflict" description="In Ref. 1; BAE21318." evidence="11" ref="1">
    <original>N</original>
    <variation>D</variation>
    <location>
        <position position="201"/>
    </location>
</feature>
<feature type="sequence conflict" description="In Ref. 1; BAE21318." evidence="11" ref="1">
    <original>S</original>
    <variation>L</variation>
    <location>
        <position position="224"/>
    </location>
</feature>
<feature type="sequence conflict" description="In Ref. 1; BAC31603." evidence="11" ref="1">
    <original>E</original>
    <variation>G</variation>
    <location>
        <position position="338"/>
    </location>
</feature>
<feature type="sequence conflict" description="In Ref. 2; AAH52858." evidence="11" ref="2">
    <original>Q</original>
    <variation>R</variation>
    <location>
        <position position="1088"/>
    </location>
</feature>
<comment type="function">
    <text evidence="1 9">GTPase activator for the Rho-type GTPases by converting them to an inactive GDP-bound state. Has strong activity toward RHOA, and weaker activity toward RAC1 and CDC42. May act as a specific effector of RAP2A to regulate Rho (By similarity). In concert with RASIP1, suppresses RhoA signaling and dampens ROCK and MYH9 activities in endothelial cells and plays an essential role in blood vessel tubulogenesis.</text>
</comment>
<comment type="subunit">
    <text evidence="1 9">Interacts with PTPN13/PTPL1. Interacts with RAP2A via its coiled coil domain (By similarity). Interacts with RASIP1.</text>
</comment>
<comment type="alternative products">
    <event type="alternative splicing"/>
    <isoform>
        <id>Q8CGF1-1</id>
        <name>1</name>
        <sequence type="displayed"/>
    </isoform>
    <isoform>
        <id>Q8CGF1-2</id>
        <name>2</name>
        <sequence type="described" ref="VSP_031060"/>
    </isoform>
</comment>
<comment type="developmental stage">
    <text evidence="9">In embryos, present in the endothelial cells of the paired aortae during vasculogenesis (at protein level).</text>
</comment>
<protein>
    <recommendedName>
        <fullName>Rho GTPase-activating protein 29</fullName>
    </recommendedName>
    <alternativeName>
        <fullName>Rho-type GTPase-activating protein 29</fullName>
    </alternativeName>
</protein>
<keyword id="KW-0025">Alternative splicing</keyword>
<keyword id="KW-0175">Coiled coil</keyword>
<keyword id="KW-0343">GTPase activation</keyword>
<keyword id="KW-0479">Metal-binding</keyword>
<keyword id="KW-0597">Phosphoprotein</keyword>
<keyword id="KW-1185">Reference proteome</keyword>
<keyword id="KW-0862">Zinc</keyword>
<keyword id="KW-0863">Zinc-finger</keyword>
<sequence length="1266" mass="142341">MIAHKQKKAKKKRVWASGQPSAAITTSEMGLKSVSSSSSFDPEYIKELVNDVRKFSHMLLYLKEAILSDCFKEVIHIRLDELLRVLKSILSKHQNLSSVDLQSAAEVLTAKVKAVNFTEVNEENKNDIFREVFSSIETLAFTFGNILTNFLMGDVGSDSILRLPISRESKSFENISVDSVDLPHEKGNFSPIELDNLLLKNTDSIELALSYAKTWSKYTKNIVSWVEKKLNLELESTRNIVKLAEATRSSIGIQEFMPLQSLFTNALLSDIHSSHLLQQTIAALQANKFVQPLLGRKNEMEKQRKEIKDLWKQQQNKLLETETALKKAKLLCMQRQDEYEKAKSSMFRAEEEQLSSSVGLAKNLNKQLEKRRRLEEEALQKVEEANEHYKVCVTNVEERRNDLENTKREILTQLRTLVFQCDLTLKAVTVNLFHMQQLQAASLANSLQSLCDSAKLYDPGQEYSEFVKATSSSELEEKVDGNVNKQMTNSPQTSGYEPADSLEDVARLPDSCHKLEEDRCSNSADMTGPSFVRSWKFGMFSDSESTGGSSESRSLDSESISPGDFHRKLPRTPSSGTMSSADDLDEREPPSPSEAGPNSLGAFKKTLMSKAALTHKFRKLRSPTKCRDCDGIVMFPGVECEECLLVCHRKCLENLVIICGHQKLQGKMHIFGAEFIQVAKKEPDGIPFVLKICASEIENRALCLQGIYRVCGNKIKTEKLCQALENGMHLVDISEFSSHDICDVLKLYLRQLPEPFILFRLYKEFIDLAKEIQHVNEEQEAKKDSPEDKKHPHVSIEVNRILLKSKDLLRQLPASHFNSLHYLIAHLRRVVDHAEENKMNSKNLGVIFGPTLIRPRPTTAPVTISSLAEYSNQARLVEFLITYSQKIFDGSLQPQAVVISNTGAVAPQVDQGYLPKPLLSPDERDTDHSMKPLFFSSKEDIRSSDCESKSFELTTSFEESERRQNALGKCDAPLLDNKVHLLFDQEHESASQKMEDVCKSPKLLLLKSNRAANSVQRHTPRTKMRPVSLPVDRLLLLASSPTERSSRDVGNVDSDKFGKNPAFEGLHRKDNSNTTRSKVNGFDQQNVQKSWDTQYVRNNFTAKTTMIVPSAYPEKGLTVNTGNNRDHPGSKAHAEPARAAGDVSERRSSDSCPATAVRAPRTLQPQHWTTFYKPPNPTFSVRGTEEKTALPSIAVPPVLVHAPQIHVTKSDPDSEATLACPVQTSGQPKESSEEPALPEGTPTCQRPRLKRMQQFEDLEDEIPQFV</sequence>
<reference key="1">
    <citation type="journal article" date="2005" name="Science">
        <title>The transcriptional landscape of the mammalian genome.</title>
        <authorList>
            <person name="Carninci P."/>
            <person name="Kasukawa T."/>
            <person name="Katayama S."/>
            <person name="Gough J."/>
            <person name="Frith M.C."/>
            <person name="Maeda N."/>
            <person name="Oyama R."/>
            <person name="Ravasi T."/>
            <person name="Lenhard B."/>
            <person name="Wells C."/>
            <person name="Kodzius R."/>
            <person name="Shimokawa K."/>
            <person name="Bajic V.B."/>
            <person name="Brenner S.E."/>
            <person name="Batalov S."/>
            <person name="Forrest A.R."/>
            <person name="Zavolan M."/>
            <person name="Davis M.J."/>
            <person name="Wilming L.G."/>
            <person name="Aidinis V."/>
            <person name="Allen J.E."/>
            <person name="Ambesi-Impiombato A."/>
            <person name="Apweiler R."/>
            <person name="Aturaliya R.N."/>
            <person name="Bailey T.L."/>
            <person name="Bansal M."/>
            <person name="Baxter L."/>
            <person name="Beisel K.W."/>
            <person name="Bersano T."/>
            <person name="Bono H."/>
            <person name="Chalk A.M."/>
            <person name="Chiu K.P."/>
            <person name="Choudhary V."/>
            <person name="Christoffels A."/>
            <person name="Clutterbuck D.R."/>
            <person name="Crowe M.L."/>
            <person name="Dalla E."/>
            <person name="Dalrymple B.P."/>
            <person name="de Bono B."/>
            <person name="Della Gatta G."/>
            <person name="di Bernardo D."/>
            <person name="Down T."/>
            <person name="Engstrom P."/>
            <person name="Fagiolini M."/>
            <person name="Faulkner G."/>
            <person name="Fletcher C.F."/>
            <person name="Fukushima T."/>
            <person name="Furuno M."/>
            <person name="Futaki S."/>
            <person name="Gariboldi M."/>
            <person name="Georgii-Hemming P."/>
            <person name="Gingeras T.R."/>
            <person name="Gojobori T."/>
            <person name="Green R.E."/>
            <person name="Gustincich S."/>
            <person name="Harbers M."/>
            <person name="Hayashi Y."/>
            <person name="Hensch T.K."/>
            <person name="Hirokawa N."/>
            <person name="Hill D."/>
            <person name="Huminiecki L."/>
            <person name="Iacono M."/>
            <person name="Ikeo K."/>
            <person name="Iwama A."/>
            <person name="Ishikawa T."/>
            <person name="Jakt M."/>
            <person name="Kanapin A."/>
            <person name="Katoh M."/>
            <person name="Kawasawa Y."/>
            <person name="Kelso J."/>
            <person name="Kitamura H."/>
            <person name="Kitano H."/>
            <person name="Kollias G."/>
            <person name="Krishnan S.P."/>
            <person name="Kruger A."/>
            <person name="Kummerfeld S.K."/>
            <person name="Kurochkin I.V."/>
            <person name="Lareau L.F."/>
            <person name="Lazarevic D."/>
            <person name="Lipovich L."/>
            <person name="Liu J."/>
            <person name="Liuni S."/>
            <person name="McWilliam S."/>
            <person name="Madan Babu M."/>
            <person name="Madera M."/>
            <person name="Marchionni L."/>
            <person name="Matsuda H."/>
            <person name="Matsuzawa S."/>
            <person name="Miki H."/>
            <person name="Mignone F."/>
            <person name="Miyake S."/>
            <person name="Morris K."/>
            <person name="Mottagui-Tabar S."/>
            <person name="Mulder N."/>
            <person name="Nakano N."/>
            <person name="Nakauchi H."/>
            <person name="Ng P."/>
            <person name="Nilsson R."/>
            <person name="Nishiguchi S."/>
            <person name="Nishikawa S."/>
            <person name="Nori F."/>
            <person name="Ohara O."/>
            <person name="Okazaki Y."/>
            <person name="Orlando V."/>
            <person name="Pang K.C."/>
            <person name="Pavan W.J."/>
            <person name="Pavesi G."/>
            <person name="Pesole G."/>
            <person name="Petrovsky N."/>
            <person name="Piazza S."/>
            <person name="Reed J."/>
            <person name="Reid J.F."/>
            <person name="Ring B.Z."/>
            <person name="Ringwald M."/>
            <person name="Rost B."/>
            <person name="Ruan Y."/>
            <person name="Salzberg S.L."/>
            <person name="Sandelin A."/>
            <person name="Schneider C."/>
            <person name="Schoenbach C."/>
            <person name="Sekiguchi K."/>
            <person name="Semple C.A."/>
            <person name="Seno S."/>
            <person name="Sessa L."/>
            <person name="Sheng Y."/>
            <person name="Shibata Y."/>
            <person name="Shimada H."/>
            <person name="Shimada K."/>
            <person name="Silva D."/>
            <person name="Sinclair B."/>
            <person name="Sperling S."/>
            <person name="Stupka E."/>
            <person name="Sugiura K."/>
            <person name="Sultana R."/>
            <person name="Takenaka Y."/>
            <person name="Taki K."/>
            <person name="Tammoja K."/>
            <person name="Tan S.L."/>
            <person name="Tang S."/>
            <person name="Taylor M.S."/>
            <person name="Tegner J."/>
            <person name="Teichmann S.A."/>
            <person name="Ueda H.R."/>
            <person name="van Nimwegen E."/>
            <person name="Verardo R."/>
            <person name="Wei C.L."/>
            <person name="Yagi K."/>
            <person name="Yamanishi H."/>
            <person name="Zabarovsky E."/>
            <person name="Zhu S."/>
            <person name="Zimmer A."/>
            <person name="Hide W."/>
            <person name="Bult C."/>
            <person name="Grimmond S.M."/>
            <person name="Teasdale R.D."/>
            <person name="Liu E.T."/>
            <person name="Brusic V."/>
            <person name="Quackenbush J."/>
            <person name="Wahlestedt C."/>
            <person name="Mattick J.S."/>
            <person name="Hume D.A."/>
            <person name="Kai C."/>
            <person name="Sasaki D."/>
            <person name="Tomaru Y."/>
            <person name="Fukuda S."/>
            <person name="Kanamori-Katayama M."/>
            <person name="Suzuki M."/>
            <person name="Aoki J."/>
            <person name="Arakawa T."/>
            <person name="Iida J."/>
            <person name="Imamura K."/>
            <person name="Itoh M."/>
            <person name="Kato T."/>
            <person name="Kawaji H."/>
            <person name="Kawagashira N."/>
            <person name="Kawashima T."/>
            <person name="Kojima M."/>
            <person name="Kondo S."/>
            <person name="Konno H."/>
            <person name="Nakano K."/>
            <person name="Ninomiya N."/>
            <person name="Nishio T."/>
            <person name="Okada M."/>
            <person name="Plessy C."/>
            <person name="Shibata K."/>
            <person name="Shiraki T."/>
            <person name="Suzuki S."/>
            <person name="Tagami M."/>
            <person name="Waki K."/>
            <person name="Watahiki A."/>
            <person name="Okamura-Oho Y."/>
            <person name="Suzuki H."/>
            <person name="Kawai J."/>
            <person name="Hayashizaki Y."/>
        </authorList>
    </citation>
    <scope>NUCLEOTIDE SEQUENCE [LARGE SCALE MRNA] (ISOFORM 1)</scope>
    <source>
        <strain>C57BL/6J</strain>
        <tissue>Brain cortex</tissue>
        <tissue>Embryo</tissue>
        <tissue>Testis</tissue>
    </source>
</reference>
<reference key="2">
    <citation type="journal article" date="2004" name="Genome Res.">
        <title>The status, quality, and expansion of the NIH full-length cDNA project: the Mammalian Gene Collection (MGC).</title>
        <authorList>
            <consortium name="The MGC Project Team"/>
        </authorList>
    </citation>
    <scope>NUCLEOTIDE SEQUENCE [LARGE SCALE MRNA] (ISOFORMS 1 AND 2)</scope>
    <source>
        <strain>C3H/He</strain>
        <strain>FVB/N</strain>
        <tissue>Mammary tumor</tissue>
        <tissue>Mesenchymal stem cell</tissue>
    </source>
</reference>
<reference key="3">
    <citation type="journal article" date="2007" name="Proc. Natl. Acad. Sci. U.S.A.">
        <title>Large-scale phosphorylation analysis of mouse liver.</title>
        <authorList>
            <person name="Villen J."/>
            <person name="Beausoleil S.A."/>
            <person name="Gerber S.A."/>
            <person name="Gygi S.P."/>
        </authorList>
    </citation>
    <scope>PHOSPHORYLATION [LARGE SCALE ANALYSIS] AT SER-171; SER-176 AND SER-179</scope>
    <scope>IDENTIFICATION BY MASS SPECTROMETRY [LARGE SCALE ANALYSIS]</scope>
    <source>
        <tissue>Liver</tissue>
    </source>
</reference>
<reference key="4">
    <citation type="journal article" date="2010" name="Cell">
        <title>A tissue-specific atlas of mouse protein phosphorylation and expression.</title>
        <authorList>
            <person name="Huttlin E.L."/>
            <person name="Jedrychowski M.P."/>
            <person name="Elias J.E."/>
            <person name="Goswami T."/>
            <person name="Rad R."/>
            <person name="Beausoleil S.A."/>
            <person name="Villen J."/>
            <person name="Haas W."/>
            <person name="Sowa M.E."/>
            <person name="Gygi S.P."/>
        </authorList>
    </citation>
    <scope>PHOSPHORYLATION [LARGE SCALE ANALYSIS] AT SER-176; SER-179; SER-190; SER-521 AND SER-1149</scope>
    <scope>IDENTIFICATION BY MASS SPECTROMETRY [LARGE SCALE ANALYSIS]</scope>
    <source>
        <tissue>Brown adipose tissue</tissue>
        <tissue>Kidney</tissue>
        <tissue>Liver</tissue>
        <tissue>Lung</tissue>
        <tissue>Spleen</tissue>
        <tissue>Testis</tissue>
    </source>
</reference>
<reference key="5">
    <citation type="journal article" date="2011" name="Dev. Cell">
        <title>Blood vessel tubulogenesis requires Rasip1 regulation of GTPase signaling.</title>
        <authorList>
            <person name="Xu K."/>
            <person name="Sacharidou A."/>
            <person name="Fu S."/>
            <person name="Chong D.C."/>
            <person name="Skaug B."/>
            <person name="Chen Z.J."/>
            <person name="Davis G.E."/>
            <person name="Cleaver O."/>
        </authorList>
    </citation>
    <scope>FUNCTION</scope>
    <scope>INTERACTION WITH RASIP1</scope>
    <scope>DEVELOPMENTAL STAGE</scope>
</reference>
<proteinExistence type="evidence at protein level"/>